<dbReference type="EMBL" id="AB110525">
    <property type="protein sequence ID" value="BAC77198.1"/>
    <property type="molecule type" value="Genomic_DNA"/>
</dbReference>
<dbReference type="RefSeq" id="YP_010894286.1">
    <property type="nucleotide sequence ID" value="NC_081061.1"/>
</dbReference>
<dbReference type="GeneID" id="83250653"/>
<dbReference type="GO" id="GO:0009507">
    <property type="term" value="C:chloroplast"/>
    <property type="evidence" value="ECO:0007669"/>
    <property type="project" value="UniProtKB-SubCell"/>
</dbReference>
<dbReference type="GO" id="GO:0003723">
    <property type="term" value="F:RNA binding"/>
    <property type="evidence" value="ECO:0007669"/>
    <property type="project" value="UniProtKB-KW"/>
</dbReference>
<dbReference type="GO" id="GO:0006397">
    <property type="term" value="P:mRNA processing"/>
    <property type="evidence" value="ECO:0007669"/>
    <property type="project" value="UniProtKB-KW"/>
</dbReference>
<dbReference type="GO" id="GO:0008380">
    <property type="term" value="P:RNA splicing"/>
    <property type="evidence" value="ECO:0007669"/>
    <property type="project" value="UniProtKB-UniRule"/>
</dbReference>
<dbReference type="GO" id="GO:0008033">
    <property type="term" value="P:tRNA processing"/>
    <property type="evidence" value="ECO:0007669"/>
    <property type="project" value="UniProtKB-KW"/>
</dbReference>
<dbReference type="HAMAP" id="MF_01390">
    <property type="entry name" value="MatK"/>
    <property type="match status" value="1"/>
</dbReference>
<dbReference type="InterPro" id="IPR024937">
    <property type="entry name" value="Domain_X"/>
</dbReference>
<dbReference type="InterPro" id="IPR002866">
    <property type="entry name" value="Maturase_MatK"/>
</dbReference>
<dbReference type="InterPro" id="IPR024942">
    <property type="entry name" value="Maturase_MatK_N"/>
</dbReference>
<dbReference type="PANTHER" id="PTHR34811">
    <property type="entry name" value="MATURASE K"/>
    <property type="match status" value="1"/>
</dbReference>
<dbReference type="PANTHER" id="PTHR34811:SF1">
    <property type="entry name" value="MATURASE K"/>
    <property type="match status" value="1"/>
</dbReference>
<dbReference type="Pfam" id="PF01348">
    <property type="entry name" value="Intron_maturas2"/>
    <property type="match status" value="1"/>
</dbReference>
<dbReference type="Pfam" id="PF01824">
    <property type="entry name" value="MatK_N"/>
    <property type="match status" value="1"/>
</dbReference>
<accession>Q7YMV1</accession>
<reference key="1">
    <citation type="submission" date="2003-05" db="EMBL/GenBank/DDBJ databases">
        <title>Phylogenetic relationship of subtribe Clematidinae (Ranunculaceae) based on chloroplast and nuclear DNA sequences.</title>
        <authorList>
            <person name="Miikeda O."/>
            <person name="Kita K."/>
            <person name="Handa T."/>
            <person name="Yukawa T."/>
        </authorList>
    </citation>
    <scope>NUCLEOTIDE SEQUENCE [GENOMIC DNA]</scope>
</reference>
<feature type="chain" id="PRO_0000143338" description="Maturase K">
    <location>
        <begin position="1"/>
        <end position="509"/>
    </location>
</feature>
<evidence type="ECO:0000255" key="1">
    <source>
        <dbReference type="HAMAP-Rule" id="MF_01390"/>
    </source>
</evidence>
<name>MATK_CLEVI</name>
<keyword id="KW-0150">Chloroplast</keyword>
<keyword id="KW-0507">mRNA processing</keyword>
<keyword id="KW-0934">Plastid</keyword>
<keyword id="KW-0694">RNA-binding</keyword>
<keyword id="KW-0819">tRNA processing</keyword>
<organism>
    <name type="scientific">Clematis vitalba</name>
    <name type="common">Evergreen clematis</name>
    <name type="synonym">Traveller's joy</name>
    <dbReference type="NCBI Taxonomy" id="37490"/>
    <lineage>
        <taxon>Eukaryota</taxon>
        <taxon>Viridiplantae</taxon>
        <taxon>Streptophyta</taxon>
        <taxon>Embryophyta</taxon>
        <taxon>Tracheophyta</taxon>
        <taxon>Spermatophyta</taxon>
        <taxon>Magnoliopsida</taxon>
        <taxon>Ranunculales</taxon>
        <taxon>Ranunculaceae</taxon>
        <taxon>Ranunculoideae</taxon>
        <taxon>Anemoneae</taxon>
        <taxon>Clematis</taxon>
    </lineage>
</organism>
<gene>
    <name evidence="1" type="primary">matK</name>
</gene>
<comment type="function">
    <text evidence="1">Usually encoded in the trnK tRNA gene intron. Probably assists in splicing its own and other chloroplast group II introns.</text>
</comment>
<comment type="subcellular location">
    <subcellularLocation>
        <location>Plastid</location>
        <location>Chloroplast</location>
    </subcellularLocation>
</comment>
<comment type="similarity">
    <text evidence="1">Belongs to the intron maturase 2 family. MatK subfamily.</text>
</comment>
<sequence>MEELQGYLKIDRSRERDFLYPLLFQEYIYALAHDHGLNKSILYEPMENLGYDKKYSLIIVKRLITRMYQQKHLIILTNDSNPNFFFGHNKNLDSQMISEGVAVIVELPFSLRLVSSPESKEIDKSMTTLRSIHSIFPFLEDKLLHLNHVLDILIPYPIHLELLVQTLRSWIQDAPFLHLLRFFLYKYHNWNSLITQKTKMILFFSKENQRFFLFLYNFHVYESESIFVFLRKQSYHLRSTSSRAFLDRTHFYRKIEHFLVDFRNDFHTILWLFKDPFIQYFRFQGKSILSSKGTPLLMKKWKYYLVNLWECHFYFWSQPDRIHINQLSNHFIDFLGYLSSVRPTPSAVRSQMLEKSFFIDIVIKKFDTRVPIIPLIGSLAKAKFCNFSGHPISKPAWADSSDSDIIDRFGRICRNLSHYYSGSSKKKSLYRIKYILRLSCARTLARKHKSTVRSFLKRLGSEFLEEFLMEEEQVLSFILPRISYFSKRLYKERIWYFDIIRINDLTNLS</sequence>
<geneLocation type="chloroplast"/>
<proteinExistence type="inferred from homology"/>
<protein>
    <recommendedName>
        <fullName evidence="1">Maturase K</fullName>
    </recommendedName>
    <alternativeName>
        <fullName evidence="1">Intron maturase</fullName>
    </alternativeName>
</protein>